<keyword id="KW-0012">Acyltransferase</keyword>
<keyword id="KW-1185">Reference proteome</keyword>
<keyword id="KW-0808">Transferase</keyword>
<accession>Q9BKR0</accession>
<feature type="chain" id="PRO_0000286878" description="N-acetyltransferase 9-like protein">
    <location>
        <begin position="1"/>
        <end position="202"/>
    </location>
</feature>
<feature type="domain" description="N-acetyltransferase" evidence="1">
    <location>
        <begin position="34"/>
        <end position="184"/>
    </location>
</feature>
<name>NAT9_CAEEL</name>
<proteinExistence type="inferred from homology"/>
<evidence type="ECO:0000255" key="1">
    <source>
        <dbReference type="PROSITE-ProRule" id="PRU00532"/>
    </source>
</evidence>
<evidence type="ECO:0000305" key="2"/>
<organism>
    <name type="scientific">Caenorhabditis elegans</name>
    <dbReference type="NCBI Taxonomy" id="6239"/>
    <lineage>
        <taxon>Eukaryota</taxon>
        <taxon>Metazoa</taxon>
        <taxon>Ecdysozoa</taxon>
        <taxon>Nematoda</taxon>
        <taxon>Chromadorea</taxon>
        <taxon>Rhabditida</taxon>
        <taxon>Rhabditina</taxon>
        <taxon>Rhabditomorpha</taxon>
        <taxon>Rhabditoidea</taxon>
        <taxon>Rhabditidae</taxon>
        <taxon>Peloderinae</taxon>
        <taxon>Caenorhabditis</taxon>
    </lineage>
</organism>
<comment type="similarity">
    <text evidence="2">Belongs to the acetyltransferase family. GNAT subfamily.</text>
</comment>
<gene>
    <name type="ORF">Y67D2.5</name>
</gene>
<reference key="1">
    <citation type="journal article" date="1998" name="Science">
        <title>Genome sequence of the nematode C. elegans: a platform for investigating biology.</title>
        <authorList>
            <consortium name="The C. elegans sequencing consortium"/>
        </authorList>
    </citation>
    <scope>NUCLEOTIDE SEQUENCE [LARGE SCALE GENOMIC DNA]</scope>
    <source>
        <strain>Bristol N2</strain>
    </source>
</reference>
<protein>
    <recommendedName>
        <fullName>N-acetyltransferase 9-like protein</fullName>
        <ecNumber>2.3.1.-</ecNumber>
    </recommendedName>
</protein>
<dbReference type="EC" id="2.3.1.-"/>
<dbReference type="EMBL" id="FO081642">
    <property type="protein sequence ID" value="CCD73029.1"/>
    <property type="molecule type" value="Genomic_DNA"/>
</dbReference>
<dbReference type="RefSeq" id="NP_497418.2">
    <property type="nucleotide sequence ID" value="NM_065017.4"/>
</dbReference>
<dbReference type="SMR" id="Q9BKR0"/>
<dbReference type="BioGRID" id="55095">
    <property type="interactions" value="1"/>
</dbReference>
<dbReference type="FunCoup" id="Q9BKR0">
    <property type="interactions" value="2342"/>
</dbReference>
<dbReference type="STRING" id="6239.Y67D2.5.1"/>
<dbReference type="PaxDb" id="6239-Y67D2.5"/>
<dbReference type="PeptideAtlas" id="Q9BKR0"/>
<dbReference type="EnsemblMetazoa" id="Y67D2.5.1">
    <property type="protein sequence ID" value="Y67D2.5.1"/>
    <property type="gene ID" value="WBGene00022055"/>
</dbReference>
<dbReference type="GeneID" id="190511"/>
<dbReference type="KEGG" id="cel:CELE_Y67D2.5"/>
<dbReference type="UCSC" id="Y67D2.5">
    <property type="organism name" value="c. elegans"/>
</dbReference>
<dbReference type="AGR" id="WB:WBGene00022055"/>
<dbReference type="CTD" id="190511"/>
<dbReference type="WormBase" id="Y67D2.5">
    <property type="protein sequence ID" value="CE39061"/>
    <property type="gene ID" value="WBGene00022055"/>
</dbReference>
<dbReference type="eggNOG" id="KOG4135">
    <property type="taxonomic scope" value="Eukaryota"/>
</dbReference>
<dbReference type="GeneTree" id="ENSGT00390000012745"/>
<dbReference type="HOGENOM" id="CLU_073102_1_1_1"/>
<dbReference type="InParanoid" id="Q9BKR0"/>
<dbReference type="OMA" id="WHVPRYH"/>
<dbReference type="OrthoDB" id="5043642at2759"/>
<dbReference type="PhylomeDB" id="Q9BKR0"/>
<dbReference type="PRO" id="PR:Q9BKR0"/>
<dbReference type="Proteomes" id="UP000001940">
    <property type="component" value="Chromosome III"/>
</dbReference>
<dbReference type="Bgee" id="WBGene00022055">
    <property type="expression patterns" value="Expressed in embryo and 3 other cell types or tissues"/>
</dbReference>
<dbReference type="GO" id="GO:0008080">
    <property type="term" value="F:N-acetyltransferase activity"/>
    <property type="evidence" value="ECO:0007669"/>
    <property type="project" value="InterPro"/>
</dbReference>
<dbReference type="FunFam" id="3.40.630.30:FF:000132">
    <property type="entry name" value="N-acetyltransferase 9-like protein"/>
    <property type="match status" value="1"/>
</dbReference>
<dbReference type="Gene3D" id="3.40.630.30">
    <property type="match status" value="1"/>
</dbReference>
<dbReference type="InterPro" id="IPR016181">
    <property type="entry name" value="Acyl_CoA_acyltransferase"/>
</dbReference>
<dbReference type="InterPro" id="IPR000182">
    <property type="entry name" value="GNAT_dom"/>
</dbReference>
<dbReference type="InterPro" id="IPR039135">
    <property type="entry name" value="NAT9-like"/>
</dbReference>
<dbReference type="PANTHER" id="PTHR13256:SF16">
    <property type="entry name" value="ALPHA_BETA-TUBULIN-N-ACETYLTRANSFERASE 9"/>
    <property type="match status" value="1"/>
</dbReference>
<dbReference type="PANTHER" id="PTHR13256">
    <property type="entry name" value="N-ACETYLTRANSFERASE 9"/>
    <property type="match status" value="1"/>
</dbReference>
<dbReference type="Pfam" id="PF13302">
    <property type="entry name" value="Acetyltransf_3"/>
    <property type="match status" value="1"/>
</dbReference>
<dbReference type="SUPFAM" id="SSF55729">
    <property type="entry name" value="Acyl-CoA N-acyltransferases (Nat)"/>
    <property type="match status" value="1"/>
</dbReference>
<dbReference type="PROSITE" id="PS51186">
    <property type="entry name" value="GNAT"/>
    <property type="match status" value="1"/>
</dbReference>
<sequence>MKLNSNVKIVAKKCILVPYEPCHVAKYHKWMENEEIRRLTGSEQLSLDEEYEMQKTWRNDEDKLTFIVLEMNESGEEVDHMLGDVNLFISTSPSTENPSDDVITGEVEVMIAEPRGRGKGIGEEAVRVIIAWAYENLKIEQFCVKITDDNTPSLSLFKKKLGFKQIGYSTAFKEFTFELPKNRLISEFSSFLEKNAEIKEYK</sequence>